<protein>
    <recommendedName>
        <fullName evidence="1">Proline--tRNA ligase</fullName>
        <ecNumber evidence="1">6.1.1.15</ecNumber>
    </recommendedName>
    <alternativeName>
        <fullName evidence="1">Prolyl-tRNA synthetase</fullName>
        <shortName evidence="1">ProRS</shortName>
    </alternativeName>
</protein>
<keyword id="KW-0030">Aminoacyl-tRNA synthetase</keyword>
<keyword id="KW-0067">ATP-binding</keyword>
<keyword id="KW-0963">Cytoplasm</keyword>
<keyword id="KW-0436">Ligase</keyword>
<keyword id="KW-0547">Nucleotide-binding</keyword>
<keyword id="KW-0648">Protein biosynthesis</keyword>
<keyword id="KW-1185">Reference proteome</keyword>
<proteinExistence type="inferred from homology"/>
<gene>
    <name evidence="1" type="primary">proS</name>
    <name type="ordered locus">Sama_1161</name>
</gene>
<comment type="function">
    <text evidence="1">Catalyzes the attachment of proline to tRNA(Pro) in a two-step reaction: proline is first activated by ATP to form Pro-AMP and then transferred to the acceptor end of tRNA(Pro). As ProRS can inadvertently accommodate and process non-cognate amino acids such as alanine and cysteine, to avoid such errors it has two additional distinct editing activities against alanine. One activity is designated as 'pretransfer' editing and involves the tRNA(Pro)-independent hydrolysis of activated Ala-AMP. The other activity is designated 'posttransfer' editing and involves deacylation of mischarged Ala-tRNA(Pro). The misacylated Cys-tRNA(Pro) is not edited by ProRS.</text>
</comment>
<comment type="catalytic activity">
    <reaction evidence="1">
        <text>tRNA(Pro) + L-proline + ATP = L-prolyl-tRNA(Pro) + AMP + diphosphate</text>
        <dbReference type="Rhea" id="RHEA:14305"/>
        <dbReference type="Rhea" id="RHEA-COMP:9700"/>
        <dbReference type="Rhea" id="RHEA-COMP:9702"/>
        <dbReference type="ChEBI" id="CHEBI:30616"/>
        <dbReference type="ChEBI" id="CHEBI:33019"/>
        <dbReference type="ChEBI" id="CHEBI:60039"/>
        <dbReference type="ChEBI" id="CHEBI:78442"/>
        <dbReference type="ChEBI" id="CHEBI:78532"/>
        <dbReference type="ChEBI" id="CHEBI:456215"/>
        <dbReference type="EC" id="6.1.1.15"/>
    </reaction>
</comment>
<comment type="subunit">
    <text evidence="1">Homodimer.</text>
</comment>
<comment type="subcellular location">
    <subcellularLocation>
        <location evidence="1">Cytoplasm</location>
    </subcellularLocation>
</comment>
<comment type="domain">
    <text evidence="1">Consists of three domains: the N-terminal catalytic domain, the editing domain and the C-terminal anticodon-binding domain.</text>
</comment>
<comment type="similarity">
    <text evidence="1">Belongs to the class-II aminoacyl-tRNA synthetase family. ProS type 1 subfamily.</text>
</comment>
<feature type="chain" id="PRO_0000288373" description="Proline--tRNA ligase">
    <location>
        <begin position="1"/>
        <end position="572"/>
    </location>
</feature>
<sequence length="572" mass="63361">MRVSKYLLSTQKETPANAEVVSHQLMLRAGMIRRNASGLYSYLPTGLRVLRKVEAIVREEMNKAGAIEILMPMVQPGDLWVETGRWDQFGPELLRFTDRHNRDFVLGPTHEEVITDLIRKEVSSYKQLPLNLYQIQTKFRDEVRPRFGVMRSREFLMKDAYSFHLTQETLDETYQAMYTAYSNIFSRMGLAFRPVLADTGSIGGSVSHEFHVLAQSGEDLIAYSTGSDYAANIEKAEAPLPTEPRGEATEALRTVDTPNAKTIAELVEQFGVAIEKTIKTLIVKGATEEAPLVALLVRGDHELNEIKADKLELVASPLEFAGEAEIRAAVGAGTGSIGPVNLKMPIIADHSVLVMSDFAAGANEDGKHFFGINWERDLPLVQGADIRNVVEGEATPDGKGTYAFARGIEVGHIFQLGNKYSEAMNATVLDENGKSQIMLMGCYGVGVSRIVAAAIEQNNDERGIVWPEAIAPFTVGILPMNMHKSHRVTDTAEALYKELTEAGFEVLFDDRKERPGVMFADMELLGIPHTVVIGDRNIDTGVYEYKNRRTGEKTEVPFAELVSFLKAQFQQG</sequence>
<dbReference type="EC" id="6.1.1.15" evidence="1"/>
<dbReference type="EMBL" id="CP000507">
    <property type="protein sequence ID" value="ABL99368.1"/>
    <property type="molecule type" value="Genomic_DNA"/>
</dbReference>
<dbReference type="RefSeq" id="WP_011759277.1">
    <property type="nucleotide sequence ID" value="NC_008700.1"/>
</dbReference>
<dbReference type="SMR" id="A1S4R2"/>
<dbReference type="STRING" id="326297.Sama_1161"/>
<dbReference type="KEGG" id="saz:Sama_1161"/>
<dbReference type="eggNOG" id="COG0442">
    <property type="taxonomic scope" value="Bacteria"/>
</dbReference>
<dbReference type="HOGENOM" id="CLU_016739_0_0_6"/>
<dbReference type="OrthoDB" id="9809052at2"/>
<dbReference type="Proteomes" id="UP000009175">
    <property type="component" value="Chromosome"/>
</dbReference>
<dbReference type="GO" id="GO:0005829">
    <property type="term" value="C:cytosol"/>
    <property type="evidence" value="ECO:0007669"/>
    <property type="project" value="TreeGrafter"/>
</dbReference>
<dbReference type="GO" id="GO:0002161">
    <property type="term" value="F:aminoacyl-tRNA deacylase activity"/>
    <property type="evidence" value="ECO:0007669"/>
    <property type="project" value="InterPro"/>
</dbReference>
<dbReference type="GO" id="GO:0005524">
    <property type="term" value="F:ATP binding"/>
    <property type="evidence" value="ECO:0007669"/>
    <property type="project" value="UniProtKB-UniRule"/>
</dbReference>
<dbReference type="GO" id="GO:0004827">
    <property type="term" value="F:proline-tRNA ligase activity"/>
    <property type="evidence" value="ECO:0007669"/>
    <property type="project" value="UniProtKB-UniRule"/>
</dbReference>
<dbReference type="GO" id="GO:0006433">
    <property type="term" value="P:prolyl-tRNA aminoacylation"/>
    <property type="evidence" value="ECO:0007669"/>
    <property type="project" value="UniProtKB-UniRule"/>
</dbReference>
<dbReference type="CDD" id="cd04334">
    <property type="entry name" value="ProRS-INS"/>
    <property type="match status" value="1"/>
</dbReference>
<dbReference type="CDD" id="cd00861">
    <property type="entry name" value="ProRS_anticodon_short"/>
    <property type="match status" value="1"/>
</dbReference>
<dbReference type="CDD" id="cd00779">
    <property type="entry name" value="ProRS_core_prok"/>
    <property type="match status" value="1"/>
</dbReference>
<dbReference type="FunFam" id="3.30.930.10:FF:000043">
    <property type="entry name" value="Proline--tRNA ligase"/>
    <property type="match status" value="1"/>
</dbReference>
<dbReference type="FunFam" id="3.30.930.10:FF:000097">
    <property type="entry name" value="Proline--tRNA ligase"/>
    <property type="match status" value="1"/>
</dbReference>
<dbReference type="FunFam" id="3.40.50.800:FF:000006">
    <property type="entry name" value="Proline--tRNA ligase"/>
    <property type="match status" value="1"/>
</dbReference>
<dbReference type="Gene3D" id="3.40.50.800">
    <property type="entry name" value="Anticodon-binding domain"/>
    <property type="match status" value="1"/>
</dbReference>
<dbReference type="Gene3D" id="3.30.930.10">
    <property type="entry name" value="Bira Bifunctional Protein, Domain 2"/>
    <property type="match status" value="2"/>
</dbReference>
<dbReference type="HAMAP" id="MF_01569">
    <property type="entry name" value="Pro_tRNA_synth_type1"/>
    <property type="match status" value="1"/>
</dbReference>
<dbReference type="InterPro" id="IPR002314">
    <property type="entry name" value="aa-tRNA-synt_IIb"/>
</dbReference>
<dbReference type="InterPro" id="IPR006195">
    <property type="entry name" value="aa-tRNA-synth_II"/>
</dbReference>
<dbReference type="InterPro" id="IPR045864">
    <property type="entry name" value="aa-tRNA-synth_II/BPL/LPL"/>
</dbReference>
<dbReference type="InterPro" id="IPR004154">
    <property type="entry name" value="Anticodon-bd"/>
</dbReference>
<dbReference type="InterPro" id="IPR036621">
    <property type="entry name" value="Anticodon-bd_dom_sf"/>
</dbReference>
<dbReference type="InterPro" id="IPR002316">
    <property type="entry name" value="Pro-tRNA-ligase_IIa"/>
</dbReference>
<dbReference type="InterPro" id="IPR004500">
    <property type="entry name" value="Pro-tRNA-synth_IIa_bac-type"/>
</dbReference>
<dbReference type="InterPro" id="IPR023717">
    <property type="entry name" value="Pro-tRNA-Synthase_IIa_type1"/>
</dbReference>
<dbReference type="InterPro" id="IPR050062">
    <property type="entry name" value="Pro-tRNA_synthetase"/>
</dbReference>
<dbReference type="InterPro" id="IPR044140">
    <property type="entry name" value="ProRS_anticodon_short"/>
</dbReference>
<dbReference type="InterPro" id="IPR033730">
    <property type="entry name" value="ProRS_core_prok"/>
</dbReference>
<dbReference type="InterPro" id="IPR036754">
    <property type="entry name" value="YbaK/aa-tRNA-synt-asso_dom_sf"/>
</dbReference>
<dbReference type="InterPro" id="IPR007214">
    <property type="entry name" value="YbaK/aa-tRNA-synth-assoc-dom"/>
</dbReference>
<dbReference type="NCBIfam" id="NF006625">
    <property type="entry name" value="PRK09194.1"/>
    <property type="match status" value="1"/>
</dbReference>
<dbReference type="NCBIfam" id="TIGR00409">
    <property type="entry name" value="proS_fam_II"/>
    <property type="match status" value="1"/>
</dbReference>
<dbReference type="PANTHER" id="PTHR42753">
    <property type="entry name" value="MITOCHONDRIAL RIBOSOME PROTEIN L39/PROLYL-TRNA LIGASE FAMILY MEMBER"/>
    <property type="match status" value="1"/>
</dbReference>
<dbReference type="PANTHER" id="PTHR42753:SF2">
    <property type="entry name" value="PROLINE--TRNA LIGASE"/>
    <property type="match status" value="1"/>
</dbReference>
<dbReference type="Pfam" id="PF03129">
    <property type="entry name" value="HGTP_anticodon"/>
    <property type="match status" value="1"/>
</dbReference>
<dbReference type="Pfam" id="PF00587">
    <property type="entry name" value="tRNA-synt_2b"/>
    <property type="match status" value="1"/>
</dbReference>
<dbReference type="Pfam" id="PF04073">
    <property type="entry name" value="tRNA_edit"/>
    <property type="match status" value="1"/>
</dbReference>
<dbReference type="PIRSF" id="PIRSF001535">
    <property type="entry name" value="ProRS_1"/>
    <property type="match status" value="1"/>
</dbReference>
<dbReference type="PRINTS" id="PR01046">
    <property type="entry name" value="TRNASYNTHPRO"/>
</dbReference>
<dbReference type="SUPFAM" id="SSF52954">
    <property type="entry name" value="Class II aaRS ABD-related"/>
    <property type="match status" value="1"/>
</dbReference>
<dbReference type="SUPFAM" id="SSF55681">
    <property type="entry name" value="Class II aaRS and biotin synthetases"/>
    <property type="match status" value="1"/>
</dbReference>
<dbReference type="SUPFAM" id="SSF55826">
    <property type="entry name" value="YbaK/ProRS associated domain"/>
    <property type="match status" value="1"/>
</dbReference>
<dbReference type="PROSITE" id="PS50862">
    <property type="entry name" value="AA_TRNA_LIGASE_II"/>
    <property type="match status" value="1"/>
</dbReference>
<organism>
    <name type="scientific">Shewanella amazonensis (strain ATCC BAA-1098 / SB2B)</name>
    <dbReference type="NCBI Taxonomy" id="326297"/>
    <lineage>
        <taxon>Bacteria</taxon>
        <taxon>Pseudomonadati</taxon>
        <taxon>Pseudomonadota</taxon>
        <taxon>Gammaproteobacteria</taxon>
        <taxon>Alteromonadales</taxon>
        <taxon>Shewanellaceae</taxon>
        <taxon>Shewanella</taxon>
    </lineage>
</organism>
<reference key="1">
    <citation type="submission" date="2006-12" db="EMBL/GenBank/DDBJ databases">
        <title>Complete sequence of Shewanella amazonensis SB2B.</title>
        <authorList>
            <consortium name="US DOE Joint Genome Institute"/>
            <person name="Copeland A."/>
            <person name="Lucas S."/>
            <person name="Lapidus A."/>
            <person name="Barry K."/>
            <person name="Detter J.C."/>
            <person name="Glavina del Rio T."/>
            <person name="Hammon N."/>
            <person name="Israni S."/>
            <person name="Dalin E."/>
            <person name="Tice H."/>
            <person name="Pitluck S."/>
            <person name="Munk A.C."/>
            <person name="Brettin T."/>
            <person name="Bruce D."/>
            <person name="Han C."/>
            <person name="Tapia R."/>
            <person name="Gilna P."/>
            <person name="Schmutz J."/>
            <person name="Larimer F."/>
            <person name="Land M."/>
            <person name="Hauser L."/>
            <person name="Kyrpides N."/>
            <person name="Mikhailova N."/>
            <person name="Fredrickson J."/>
            <person name="Richardson P."/>
        </authorList>
    </citation>
    <scope>NUCLEOTIDE SEQUENCE [LARGE SCALE GENOMIC DNA]</scope>
    <source>
        <strain>ATCC BAA-1098 / SB2B</strain>
    </source>
</reference>
<name>SYP_SHEAM</name>
<evidence type="ECO:0000255" key="1">
    <source>
        <dbReference type="HAMAP-Rule" id="MF_01569"/>
    </source>
</evidence>
<accession>A1S4R2</accession>